<organism>
    <name type="scientific">Xanthomonas oryzae pv. oryzae (strain KACC10331 / KXO85)</name>
    <dbReference type="NCBI Taxonomy" id="291331"/>
    <lineage>
        <taxon>Bacteria</taxon>
        <taxon>Pseudomonadati</taxon>
        <taxon>Pseudomonadota</taxon>
        <taxon>Gammaproteobacteria</taxon>
        <taxon>Lysobacterales</taxon>
        <taxon>Lysobacteraceae</taxon>
        <taxon>Xanthomonas</taxon>
    </lineage>
</organism>
<gene>
    <name evidence="1" type="primary">hisF</name>
    <name type="ordered locus">XOO2261</name>
</gene>
<name>HIS6_XANOR</name>
<feature type="chain" id="PRO_0000142269" description="Imidazole glycerol phosphate synthase subunit HisF">
    <location>
        <begin position="1"/>
        <end position="258"/>
    </location>
</feature>
<feature type="active site" evidence="1">
    <location>
        <position position="11"/>
    </location>
</feature>
<feature type="active site" evidence="1">
    <location>
        <position position="130"/>
    </location>
</feature>
<sequence length="258" mass="28201">MLSRRIIPCLDVRNGRVVKGVKFHDHIDMGDIVELALRYRAQGADELVFYDIGASPEGRSVDYTWVERVARLIDIPFCVAGGIGDVETARAVLHAGADKISINSPALGRPQLISELADAFGVQCVVVGIDSIREDDGQWRVRRYTGDPSKTQALPMRTLDWVAEAQRLGAGEIVLNCMDNDGVRRGYDIAQLRQVRALCHVPLIASGGAGEMQHFADVFDQADVDGALAASVFHSGAIPIPELKQFLRAQQIEVRDGQ</sequence>
<reference key="1">
    <citation type="journal article" date="2005" name="Nucleic Acids Res.">
        <title>The genome sequence of Xanthomonas oryzae pathovar oryzae KACC10331, the bacterial blight pathogen of rice.</title>
        <authorList>
            <person name="Lee B.-M."/>
            <person name="Park Y.-J."/>
            <person name="Park D.-S."/>
            <person name="Kang H.-W."/>
            <person name="Kim J.-G."/>
            <person name="Song E.-S."/>
            <person name="Park I.-C."/>
            <person name="Yoon U.-H."/>
            <person name="Hahn J.-H."/>
            <person name="Koo B.-S."/>
            <person name="Lee G.-B."/>
            <person name="Kim H."/>
            <person name="Park H.-S."/>
            <person name="Yoon K.-O."/>
            <person name="Kim J.-H."/>
            <person name="Jung C.-H."/>
            <person name="Koh N.-H."/>
            <person name="Seo J.-S."/>
            <person name="Go S.-J."/>
        </authorList>
    </citation>
    <scope>NUCLEOTIDE SEQUENCE [LARGE SCALE GENOMIC DNA]</scope>
    <source>
        <strain>KACC10331 / KXO85</strain>
    </source>
</reference>
<dbReference type="EC" id="4.3.2.10" evidence="1"/>
<dbReference type="EMBL" id="AE013598">
    <property type="protein sequence ID" value="AAW75515.1"/>
    <property type="status" value="ALT_INIT"/>
    <property type="molecule type" value="Genomic_DNA"/>
</dbReference>
<dbReference type="SMR" id="Q5H0K6"/>
<dbReference type="STRING" id="291331.XOO2261"/>
<dbReference type="KEGG" id="xoo:XOO2261"/>
<dbReference type="HOGENOM" id="CLU_048577_4_0_6"/>
<dbReference type="UniPathway" id="UPA00031">
    <property type="reaction ID" value="UER00010"/>
</dbReference>
<dbReference type="Proteomes" id="UP000006735">
    <property type="component" value="Chromosome"/>
</dbReference>
<dbReference type="GO" id="GO:0005737">
    <property type="term" value="C:cytoplasm"/>
    <property type="evidence" value="ECO:0007669"/>
    <property type="project" value="UniProtKB-SubCell"/>
</dbReference>
<dbReference type="GO" id="GO:0000107">
    <property type="term" value="F:imidazoleglycerol-phosphate synthase activity"/>
    <property type="evidence" value="ECO:0007669"/>
    <property type="project" value="UniProtKB-UniRule"/>
</dbReference>
<dbReference type="GO" id="GO:0016829">
    <property type="term" value="F:lyase activity"/>
    <property type="evidence" value="ECO:0007669"/>
    <property type="project" value="UniProtKB-KW"/>
</dbReference>
<dbReference type="GO" id="GO:0000105">
    <property type="term" value="P:L-histidine biosynthetic process"/>
    <property type="evidence" value="ECO:0007669"/>
    <property type="project" value="UniProtKB-UniRule"/>
</dbReference>
<dbReference type="CDD" id="cd04731">
    <property type="entry name" value="HisF"/>
    <property type="match status" value="1"/>
</dbReference>
<dbReference type="FunFam" id="3.20.20.70:FF:000006">
    <property type="entry name" value="Imidazole glycerol phosphate synthase subunit HisF"/>
    <property type="match status" value="1"/>
</dbReference>
<dbReference type="Gene3D" id="3.20.20.70">
    <property type="entry name" value="Aldolase class I"/>
    <property type="match status" value="1"/>
</dbReference>
<dbReference type="HAMAP" id="MF_01013">
    <property type="entry name" value="HisF"/>
    <property type="match status" value="1"/>
</dbReference>
<dbReference type="InterPro" id="IPR013785">
    <property type="entry name" value="Aldolase_TIM"/>
</dbReference>
<dbReference type="InterPro" id="IPR006062">
    <property type="entry name" value="His_biosynth"/>
</dbReference>
<dbReference type="InterPro" id="IPR004651">
    <property type="entry name" value="HisF"/>
</dbReference>
<dbReference type="InterPro" id="IPR050064">
    <property type="entry name" value="IGPS_HisA/HisF"/>
</dbReference>
<dbReference type="InterPro" id="IPR011060">
    <property type="entry name" value="RibuloseP-bd_barrel"/>
</dbReference>
<dbReference type="NCBIfam" id="TIGR00735">
    <property type="entry name" value="hisF"/>
    <property type="match status" value="1"/>
</dbReference>
<dbReference type="PANTHER" id="PTHR21235:SF2">
    <property type="entry name" value="IMIDAZOLE GLYCEROL PHOSPHATE SYNTHASE HISHF"/>
    <property type="match status" value="1"/>
</dbReference>
<dbReference type="PANTHER" id="PTHR21235">
    <property type="entry name" value="IMIDAZOLE GLYCEROL PHOSPHATE SYNTHASE SUBUNIT HISF/H IGP SYNTHASE SUBUNIT HISF/H"/>
    <property type="match status" value="1"/>
</dbReference>
<dbReference type="Pfam" id="PF00977">
    <property type="entry name" value="His_biosynth"/>
    <property type="match status" value="1"/>
</dbReference>
<dbReference type="SUPFAM" id="SSF51366">
    <property type="entry name" value="Ribulose-phoshate binding barrel"/>
    <property type="match status" value="1"/>
</dbReference>
<proteinExistence type="inferred from homology"/>
<comment type="function">
    <text evidence="1">IGPS catalyzes the conversion of PRFAR and glutamine to IGP, AICAR and glutamate. The HisF subunit catalyzes the cyclization activity that produces IGP and AICAR from PRFAR using the ammonia provided by the HisH subunit.</text>
</comment>
<comment type="catalytic activity">
    <reaction evidence="1">
        <text>5-[(5-phospho-1-deoxy-D-ribulos-1-ylimino)methylamino]-1-(5-phospho-beta-D-ribosyl)imidazole-4-carboxamide + L-glutamine = D-erythro-1-(imidazol-4-yl)glycerol 3-phosphate + 5-amino-1-(5-phospho-beta-D-ribosyl)imidazole-4-carboxamide + L-glutamate + H(+)</text>
        <dbReference type="Rhea" id="RHEA:24793"/>
        <dbReference type="ChEBI" id="CHEBI:15378"/>
        <dbReference type="ChEBI" id="CHEBI:29985"/>
        <dbReference type="ChEBI" id="CHEBI:58278"/>
        <dbReference type="ChEBI" id="CHEBI:58359"/>
        <dbReference type="ChEBI" id="CHEBI:58475"/>
        <dbReference type="ChEBI" id="CHEBI:58525"/>
        <dbReference type="EC" id="4.3.2.10"/>
    </reaction>
</comment>
<comment type="pathway">
    <text evidence="1">Amino-acid biosynthesis; L-histidine biosynthesis; L-histidine from 5-phospho-alpha-D-ribose 1-diphosphate: step 5/9.</text>
</comment>
<comment type="subunit">
    <text evidence="1">Heterodimer of HisH and HisF.</text>
</comment>
<comment type="subcellular location">
    <subcellularLocation>
        <location evidence="1">Cytoplasm</location>
    </subcellularLocation>
</comment>
<comment type="similarity">
    <text evidence="1">Belongs to the HisA/HisF family.</text>
</comment>
<comment type="sequence caution" evidence="2">
    <conflict type="erroneous initiation">
        <sequence resource="EMBL-CDS" id="AAW75515"/>
    </conflict>
</comment>
<accession>Q5H0K6</accession>
<protein>
    <recommendedName>
        <fullName evidence="1">Imidazole glycerol phosphate synthase subunit HisF</fullName>
        <ecNumber evidence="1">4.3.2.10</ecNumber>
    </recommendedName>
    <alternativeName>
        <fullName evidence="1">IGP synthase cyclase subunit</fullName>
    </alternativeName>
    <alternativeName>
        <fullName evidence="1">IGP synthase subunit HisF</fullName>
    </alternativeName>
    <alternativeName>
        <fullName evidence="1">ImGP synthase subunit HisF</fullName>
        <shortName evidence="1">IGPS subunit HisF</shortName>
    </alternativeName>
</protein>
<evidence type="ECO:0000255" key="1">
    <source>
        <dbReference type="HAMAP-Rule" id="MF_01013"/>
    </source>
</evidence>
<evidence type="ECO:0000305" key="2"/>
<keyword id="KW-0028">Amino-acid biosynthesis</keyword>
<keyword id="KW-0963">Cytoplasm</keyword>
<keyword id="KW-0368">Histidine biosynthesis</keyword>
<keyword id="KW-0456">Lyase</keyword>
<keyword id="KW-1185">Reference proteome</keyword>